<accession>P0CL57</accession>
<accession>L0T5F4</accession>
<reference key="1">
    <citation type="journal article" date="1998" name="Nature">
        <title>Deciphering the biology of Mycobacterium tuberculosis from the complete genome sequence.</title>
        <authorList>
            <person name="Cole S.T."/>
            <person name="Brosch R."/>
            <person name="Parkhill J."/>
            <person name="Garnier T."/>
            <person name="Churcher C.M."/>
            <person name="Harris D.E."/>
            <person name="Gordon S.V."/>
            <person name="Eiglmeier K."/>
            <person name="Gas S."/>
            <person name="Barry C.E. III"/>
            <person name="Tekaia F."/>
            <person name="Badcock K."/>
            <person name="Basham D."/>
            <person name="Brown D."/>
            <person name="Chillingworth T."/>
            <person name="Connor R."/>
            <person name="Davies R.M."/>
            <person name="Devlin K."/>
            <person name="Feltwell T."/>
            <person name="Gentles S."/>
            <person name="Hamlin N."/>
            <person name="Holroyd S."/>
            <person name="Hornsby T."/>
            <person name="Jagels K."/>
            <person name="Krogh A."/>
            <person name="McLean J."/>
            <person name="Moule S."/>
            <person name="Murphy L.D."/>
            <person name="Oliver S."/>
            <person name="Osborne J."/>
            <person name="Quail M.A."/>
            <person name="Rajandream M.A."/>
            <person name="Rogers J."/>
            <person name="Rutter S."/>
            <person name="Seeger K."/>
            <person name="Skelton S."/>
            <person name="Squares S."/>
            <person name="Squares R."/>
            <person name="Sulston J.E."/>
            <person name="Taylor K."/>
            <person name="Whitehead S."/>
            <person name="Barrell B.G."/>
        </authorList>
    </citation>
    <scope>NUCLEOTIDE SEQUENCE [LARGE SCALE GENOMIC DNA]</scope>
    <source>
        <strain>ATCC 25618 / H37Rv</strain>
    </source>
</reference>
<reference key="2">
    <citation type="journal article" date="2005" name="Nucleic Acids Res.">
        <title>Toxin-antitoxin loci are highly abundant in free-living but lost from host-associated prokaryotes.</title>
        <authorList>
            <person name="Pandey D.P."/>
            <person name="Gerdes K."/>
        </authorList>
    </citation>
    <scope>IDENTIFICATION</scope>
    <scope>POSSIBLE FUNCTION</scope>
    <source>
        <strain>ATCC 25618 / H37Rv</strain>
    </source>
</reference>
<evidence type="ECO:0000250" key="1">
    <source>
        <dbReference type="UniProtKB" id="O53451"/>
    </source>
</evidence>
<evidence type="ECO:0000305" key="2"/>
<feature type="chain" id="PRO_0000406295" description="Probable antitoxin MazE1">
    <location>
        <begin position="1"/>
        <end position="57"/>
    </location>
</feature>
<keyword id="KW-1185">Reference proteome</keyword>
<keyword id="KW-1277">Toxin-antitoxin system</keyword>
<gene>
    <name type="primary">mazE1</name>
    <name type="ordered locus">Rv0456B</name>
</gene>
<proteinExistence type="inferred from homology"/>
<dbReference type="EMBL" id="AL123456">
    <property type="protein sequence ID" value="CCP43189.1"/>
    <property type="molecule type" value="Genomic_DNA"/>
</dbReference>
<dbReference type="RefSeq" id="WP_003903009.1">
    <property type="nucleotide sequence ID" value="NZ_NVQJ01000002.1"/>
</dbReference>
<dbReference type="RefSeq" id="YP_007409102.1">
    <property type="nucleotide sequence ID" value="NC_000962.3"/>
</dbReference>
<dbReference type="SMR" id="P0CL57"/>
<dbReference type="STRING" id="83332.Rv0456B"/>
<dbReference type="PaxDb" id="83332-Rv0456B"/>
<dbReference type="GeneID" id="14515889"/>
<dbReference type="KEGG" id="mtu:Rv0456B"/>
<dbReference type="KEGG" id="mtv:RVBD_0456B"/>
<dbReference type="TubercuList" id="Rv0456B"/>
<dbReference type="InParanoid" id="P0CL57"/>
<dbReference type="Proteomes" id="UP000001584">
    <property type="component" value="Chromosome"/>
</dbReference>
<comment type="function">
    <text evidence="2">Antitoxin component of a type II toxin-antitoxin (TA) system.</text>
</comment>
<comment type="subunit">
    <text evidence="1">Forms a complex with cognate toxin MazF1.</text>
</comment>
<name>MAZE1_MYCTU</name>
<sequence length="57" mass="6791">MTTYYYVLLSVTTWVGLRHEAKRELVYRGRRSIGRMPREWACRRSRRFAANGVDAAR</sequence>
<protein>
    <recommendedName>
        <fullName evidence="2">Probable antitoxin MazE1</fullName>
    </recommendedName>
</protein>
<organism>
    <name type="scientific">Mycobacterium tuberculosis (strain ATCC 25618 / H37Rv)</name>
    <dbReference type="NCBI Taxonomy" id="83332"/>
    <lineage>
        <taxon>Bacteria</taxon>
        <taxon>Bacillati</taxon>
        <taxon>Actinomycetota</taxon>
        <taxon>Actinomycetes</taxon>
        <taxon>Mycobacteriales</taxon>
        <taxon>Mycobacteriaceae</taxon>
        <taxon>Mycobacterium</taxon>
        <taxon>Mycobacterium tuberculosis complex</taxon>
    </lineage>
</organism>